<accession>A8FED0</accession>
<gene>
    <name evidence="1" type="primary">metAA</name>
    <name type="ordered locus">BPUM_1927</name>
</gene>
<proteinExistence type="inferred from homology"/>
<keyword id="KW-0012">Acyltransferase</keyword>
<keyword id="KW-0028">Amino-acid biosynthesis</keyword>
<keyword id="KW-0963">Cytoplasm</keyword>
<keyword id="KW-0486">Methionine biosynthesis</keyword>
<keyword id="KW-0808">Transferase</keyword>
<comment type="function">
    <text evidence="1">Transfers an acetyl group from acetyl-CoA to L-homoserine, forming acetyl-L-homoserine.</text>
</comment>
<comment type="catalytic activity">
    <reaction evidence="1">
        <text>L-homoserine + acetyl-CoA = O-acetyl-L-homoserine + CoA</text>
        <dbReference type="Rhea" id="RHEA:13701"/>
        <dbReference type="ChEBI" id="CHEBI:57287"/>
        <dbReference type="ChEBI" id="CHEBI:57288"/>
        <dbReference type="ChEBI" id="CHEBI:57476"/>
        <dbReference type="ChEBI" id="CHEBI:57716"/>
        <dbReference type="EC" id="2.3.1.31"/>
    </reaction>
</comment>
<comment type="pathway">
    <text evidence="1">Amino-acid biosynthesis; L-methionine biosynthesis via de novo pathway; O-acetyl-L-homoserine from L-homoserine: step 1/1.</text>
</comment>
<comment type="subcellular location">
    <subcellularLocation>
        <location evidence="1">Cytoplasm</location>
    </subcellularLocation>
</comment>
<comment type="similarity">
    <text evidence="1">Belongs to the MetA family.</text>
</comment>
<dbReference type="EC" id="2.3.1.31" evidence="1"/>
<dbReference type="EMBL" id="CP000813">
    <property type="protein sequence ID" value="ABV62597.1"/>
    <property type="molecule type" value="Genomic_DNA"/>
</dbReference>
<dbReference type="RefSeq" id="WP_012010315.1">
    <property type="nucleotide sequence ID" value="NC_009848.4"/>
</dbReference>
<dbReference type="SMR" id="A8FED0"/>
<dbReference type="STRING" id="315750.BPUM_1927"/>
<dbReference type="GeneID" id="5621191"/>
<dbReference type="KEGG" id="bpu:BPUM_1927"/>
<dbReference type="eggNOG" id="COG1897">
    <property type="taxonomic scope" value="Bacteria"/>
</dbReference>
<dbReference type="HOGENOM" id="CLU_057851_0_1_9"/>
<dbReference type="OrthoDB" id="9772423at2"/>
<dbReference type="UniPathway" id="UPA00051">
    <property type="reaction ID" value="UER00074"/>
</dbReference>
<dbReference type="Proteomes" id="UP000001355">
    <property type="component" value="Chromosome"/>
</dbReference>
<dbReference type="GO" id="GO:0005737">
    <property type="term" value="C:cytoplasm"/>
    <property type="evidence" value="ECO:0007669"/>
    <property type="project" value="UniProtKB-SubCell"/>
</dbReference>
<dbReference type="GO" id="GO:0004414">
    <property type="term" value="F:homoserine O-acetyltransferase activity"/>
    <property type="evidence" value="ECO:0007669"/>
    <property type="project" value="UniProtKB-EC"/>
</dbReference>
<dbReference type="GO" id="GO:0008899">
    <property type="term" value="F:homoserine O-succinyltransferase activity"/>
    <property type="evidence" value="ECO:0007669"/>
    <property type="project" value="UniProtKB-UniRule"/>
</dbReference>
<dbReference type="GO" id="GO:0019281">
    <property type="term" value="P:L-methionine biosynthetic process from homoserine via O-succinyl-L-homoserine and cystathionine"/>
    <property type="evidence" value="ECO:0007669"/>
    <property type="project" value="InterPro"/>
</dbReference>
<dbReference type="CDD" id="cd03131">
    <property type="entry name" value="GATase1_HTS"/>
    <property type="match status" value="1"/>
</dbReference>
<dbReference type="FunFam" id="3.40.50.880:FF:000004">
    <property type="entry name" value="Homoserine O-succinyltransferase"/>
    <property type="match status" value="1"/>
</dbReference>
<dbReference type="Gene3D" id="3.40.50.880">
    <property type="match status" value="1"/>
</dbReference>
<dbReference type="HAMAP" id="MF_00295">
    <property type="entry name" value="MetA_acyltransf"/>
    <property type="match status" value="1"/>
</dbReference>
<dbReference type="InterPro" id="IPR029062">
    <property type="entry name" value="Class_I_gatase-like"/>
</dbReference>
<dbReference type="InterPro" id="IPR005697">
    <property type="entry name" value="HST_MetA"/>
</dbReference>
<dbReference type="InterPro" id="IPR033752">
    <property type="entry name" value="MetA_family"/>
</dbReference>
<dbReference type="NCBIfam" id="TIGR01001">
    <property type="entry name" value="metA"/>
    <property type="match status" value="1"/>
</dbReference>
<dbReference type="PANTHER" id="PTHR20919">
    <property type="entry name" value="HOMOSERINE O-SUCCINYLTRANSFERASE"/>
    <property type="match status" value="1"/>
</dbReference>
<dbReference type="PANTHER" id="PTHR20919:SF0">
    <property type="entry name" value="HOMOSERINE O-SUCCINYLTRANSFERASE"/>
    <property type="match status" value="1"/>
</dbReference>
<dbReference type="Pfam" id="PF04204">
    <property type="entry name" value="HTS"/>
    <property type="match status" value="1"/>
</dbReference>
<dbReference type="PIRSF" id="PIRSF000450">
    <property type="entry name" value="H_ser_succinyltr"/>
    <property type="match status" value="1"/>
</dbReference>
<dbReference type="SUPFAM" id="SSF52317">
    <property type="entry name" value="Class I glutamine amidotransferase-like"/>
    <property type="match status" value="1"/>
</dbReference>
<sequence>MPINIPVHLPAKQILESENIFVMDETRAFKQDIRPLNIVILNLMPKKIQTETQLLRMLGNSPLQVYFTFLIPSTHTPKNTSREHLDEFYTTFESIRHKKFDGMIITGAPIEHLAFEEVSYWKELQEILDWSKTNVTSTLHICWGAQAGLYHHYGIEKIKLAEKKFGVFEHLVKEKKERLVRGFDELYYVPHSRHTDINTEQLKNTPNLKVLSVSEEAGVCLIVSDDDKQVFLTGHPEYDTDTLKQEYERDLLKDDTVKKPVHYFIEDGDALVPVNRWKAHATLLFMNWLNYYVYQETPYVWE</sequence>
<organism>
    <name type="scientific">Bacillus pumilus (strain SAFR-032)</name>
    <dbReference type="NCBI Taxonomy" id="315750"/>
    <lineage>
        <taxon>Bacteria</taxon>
        <taxon>Bacillati</taxon>
        <taxon>Bacillota</taxon>
        <taxon>Bacilli</taxon>
        <taxon>Bacillales</taxon>
        <taxon>Bacillaceae</taxon>
        <taxon>Bacillus</taxon>
    </lineage>
</organism>
<protein>
    <recommendedName>
        <fullName evidence="1">Homoserine O-acetyltransferase</fullName>
        <shortName evidence="1">HAT</shortName>
        <ecNumber evidence="1">2.3.1.31</ecNumber>
    </recommendedName>
    <alternativeName>
        <fullName evidence="1">Homoserine transacetylase</fullName>
        <shortName evidence="1">HTA</shortName>
    </alternativeName>
</protein>
<feature type="chain" id="PRO_1000059289" description="Homoserine O-acetyltransferase">
    <location>
        <begin position="1"/>
        <end position="302"/>
    </location>
</feature>
<feature type="active site" description="Acyl-thioester intermediate" evidence="1">
    <location>
        <position position="142"/>
    </location>
</feature>
<feature type="active site" description="Proton acceptor" evidence="1">
    <location>
        <position position="235"/>
    </location>
</feature>
<feature type="active site" evidence="1">
    <location>
        <position position="237"/>
    </location>
</feature>
<feature type="binding site" evidence="1">
    <location>
        <position position="163"/>
    </location>
    <ligand>
        <name>substrate</name>
    </ligand>
</feature>
<feature type="binding site" evidence="1">
    <location>
        <position position="192"/>
    </location>
    <ligand>
        <name>substrate</name>
    </ligand>
</feature>
<feature type="binding site" evidence="1">
    <location>
        <position position="249"/>
    </location>
    <ligand>
        <name>substrate</name>
    </ligand>
</feature>
<feature type="site" description="Important for acyl-CoA specificity" evidence="1">
    <location>
        <position position="111"/>
    </location>
</feature>
<feature type="site" description="Important for substrate specificity" evidence="1">
    <location>
        <position position="192"/>
    </location>
</feature>
<evidence type="ECO:0000255" key="1">
    <source>
        <dbReference type="HAMAP-Rule" id="MF_00295"/>
    </source>
</evidence>
<reference key="1">
    <citation type="journal article" date="2007" name="PLoS ONE">
        <title>Paradoxical DNA repair and peroxide resistance gene conservation in Bacillus pumilus SAFR-032.</title>
        <authorList>
            <person name="Gioia J."/>
            <person name="Yerrapragada S."/>
            <person name="Qin X."/>
            <person name="Jiang H."/>
            <person name="Igboeli O.C."/>
            <person name="Muzny D."/>
            <person name="Dugan-Rocha S."/>
            <person name="Ding Y."/>
            <person name="Hawes A."/>
            <person name="Liu W."/>
            <person name="Perez L."/>
            <person name="Kovar C."/>
            <person name="Dinh H."/>
            <person name="Lee S."/>
            <person name="Nazareth L."/>
            <person name="Blyth P."/>
            <person name="Holder M."/>
            <person name="Buhay C."/>
            <person name="Tirumalai M.R."/>
            <person name="Liu Y."/>
            <person name="Dasgupta I."/>
            <person name="Bokhetache L."/>
            <person name="Fujita M."/>
            <person name="Karouia F."/>
            <person name="Eswara Moorthy P."/>
            <person name="Siefert J."/>
            <person name="Uzman A."/>
            <person name="Buzumbo P."/>
            <person name="Verma A."/>
            <person name="Zwiya H."/>
            <person name="McWilliams B.D."/>
            <person name="Olowu A."/>
            <person name="Clinkenbeard K.D."/>
            <person name="Newcombe D."/>
            <person name="Golebiewski L."/>
            <person name="Petrosino J.F."/>
            <person name="Nicholson W.L."/>
            <person name="Fox G.E."/>
            <person name="Venkateswaran K."/>
            <person name="Highlander S.K."/>
            <person name="Weinstock G.M."/>
        </authorList>
    </citation>
    <scope>NUCLEOTIDE SEQUENCE [LARGE SCALE GENOMIC DNA]</scope>
    <source>
        <strain>SAFR-032</strain>
    </source>
</reference>
<name>METAA_BACP2</name>